<organism>
    <name type="scientific">Prochlorococcus marinus (strain MIT 9313)</name>
    <dbReference type="NCBI Taxonomy" id="74547"/>
    <lineage>
        <taxon>Bacteria</taxon>
        <taxon>Bacillati</taxon>
        <taxon>Cyanobacteriota</taxon>
        <taxon>Cyanophyceae</taxon>
        <taxon>Synechococcales</taxon>
        <taxon>Prochlorococcaceae</taxon>
        <taxon>Prochlorococcus</taxon>
    </lineage>
</organism>
<reference key="1">
    <citation type="journal article" date="2003" name="Nature">
        <title>Genome divergence in two Prochlorococcus ecotypes reflects oceanic niche differentiation.</title>
        <authorList>
            <person name="Rocap G."/>
            <person name="Larimer F.W."/>
            <person name="Lamerdin J.E."/>
            <person name="Malfatti S."/>
            <person name="Chain P."/>
            <person name="Ahlgren N.A."/>
            <person name="Arellano A."/>
            <person name="Coleman M."/>
            <person name="Hauser L."/>
            <person name="Hess W.R."/>
            <person name="Johnson Z.I."/>
            <person name="Land M.L."/>
            <person name="Lindell D."/>
            <person name="Post A.F."/>
            <person name="Regala W."/>
            <person name="Shah M."/>
            <person name="Shaw S.L."/>
            <person name="Steglich C."/>
            <person name="Sullivan M.B."/>
            <person name="Ting C.S."/>
            <person name="Tolonen A."/>
            <person name="Webb E.A."/>
            <person name="Zinser E.R."/>
            <person name="Chisholm S.W."/>
        </authorList>
    </citation>
    <scope>NUCLEOTIDE SEQUENCE [LARGE SCALE GENOMIC DNA]</scope>
    <source>
        <strain>MIT 9313</strain>
    </source>
</reference>
<dbReference type="EC" id="3.4.21.92" evidence="1"/>
<dbReference type="EMBL" id="BX548175">
    <property type="protein sequence ID" value="CAE20489.1"/>
    <property type="molecule type" value="Genomic_DNA"/>
</dbReference>
<dbReference type="RefSeq" id="WP_011129693.1">
    <property type="nucleotide sequence ID" value="NC_005071.1"/>
</dbReference>
<dbReference type="SMR" id="Q7V8M4"/>
<dbReference type="MEROPS" id="S14.001"/>
<dbReference type="KEGG" id="pmt:PMT_0314"/>
<dbReference type="eggNOG" id="COG0740">
    <property type="taxonomic scope" value="Bacteria"/>
</dbReference>
<dbReference type="HOGENOM" id="CLU_058707_3_2_3"/>
<dbReference type="OrthoDB" id="571524at2"/>
<dbReference type="Proteomes" id="UP000001423">
    <property type="component" value="Chromosome"/>
</dbReference>
<dbReference type="GO" id="GO:0005737">
    <property type="term" value="C:cytoplasm"/>
    <property type="evidence" value="ECO:0007669"/>
    <property type="project" value="UniProtKB-SubCell"/>
</dbReference>
<dbReference type="GO" id="GO:0009368">
    <property type="term" value="C:endopeptidase Clp complex"/>
    <property type="evidence" value="ECO:0007669"/>
    <property type="project" value="TreeGrafter"/>
</dbReference>
<dbReference type="GO" id="GO:0004176">
    <property type="term" value="F:ATP-dependent peptidase activity"/>
    <property type="evidence" value="ECO:0007669"/>
    <property type="project" value="InterPro"/>
</dbReference>
<dbReference type="GO" id="GO:0051117">
    <property type="term" value="F:ATPase binding"/>
    <property type="evidence" value="ECO:0007669"/>
    <property type="project" value="TreeGrafter"/>
</dbReference>
<dbReference type="GO" id="GO:0004252">
    <property type="term" value="F:serine-type endopeptidase activity"/>
    <property type="evidence" value="ECO:0007669"/>
    <property type="project" value="UniProtKB-UniRule"/>
</dbReference>
<dbReference type="GO" id="GO:0006515">
    <property type="term" value="P:protein quality control for misfolded or incompletely synthesized proteins"/>
    <property type="evidence" value="ECO:0007669"/>
    <property type="project" value="TreeGrafter"/>
</dbReference>
<dbReference type="CDD" id="cd07017">
    <property type="entry name" value="S14_ClpP_2"/>
    <property type="match status" value="1"/>
</dbReference>
<dbReference type="FunFam" id="3.90.226.10:FF:000001">
    <property type="entry name" value="ATP-dependent Clp protease proteolytic subunit"/>
    <property type="match status" value="1"/>
</dbReference>
<dbReference type="Gene3D" id="3.90.226.10">
    <property type="entry name" value="2-enoyl-CoA Hydratase, Chain A, domain 1"/>
    <property type="match status" value="1"/>
</dbReference>
<dbReference type="HAMAP" id="MF_00444">
    <property type="entry name" value="ClpP"/>
    <property type="match status" value="1"/>
</dbReference>
<dbReference type="InterPro" id="IPR001907">
    <property type="entry name" value="ClpP"/>
</dbReference>
<dbReference type="InterPro" id="IPR029045">
    <property type="entry name" value="ClpP/crotonase-like_dom_sf"/>
</dbReference>
<dbReference type="InterPro" id="IPR023562">
    <property type="entry name" value="ClpP/TepA"/>
</dbReference>
<dbReference type="InterPro" id="IPR033135">
    <property type="entry name" value="ClpP_His_AS"/>
</dbReference>
<dbReference type="InterPro" id="IPR018215">
    <property type="entry name" value="ClpP_Ser_AS"/>
</dbReference>
<dbReference type="NCBIfam" id="NF001368">
    <property type="entry name" value="PRK00277.1"/>
    <property type="match status" value="1"/>
</dbReference>
<dbReference type="NCBIfam" id="NF009205">
    <property type="entry name" value="PRK12553.1"/>
    <property type="match status" value="1"/>
</dbReference>
<dbReference type="PANTHER" id="PTHR10381">
    <property type="entry name" value="ATP-DEPENDENT CLP PROTEASE PROTEOLYTIC SUBUNIT"/>
    <property type="match status" value="1"/>
</dbReference>
<dbReference type="PANTHER" id="PTHR10381:SF70">
    <property type="entry name" value="ATP-DEPENDENT CLP PROTEASE PROTEOLYTIC SUBUNIT"/>
    <property type="match status" value="1"/>
</dbReference>
<dbReference type="Pfam" id="PF00574">
    <property type="entry name" value="CLP_protease"/>
    <property type="match status" value="1"/>
</dbReference>
<dbReference type="PRINTS" id="PR00127">
    <property type="entry name" value="CLPPROTEASEP"/>
</dbReference>
<dbReference type="SUPFAM" id="SSF52096">
    <property type="entry name" value="ClpP/crotonase"/>
    <property type="match status" value="1"/>
</dbReference>
<dbReference type="PROSITE" id="PS00382">
    <property type="entry name" value="CLP_PROTEASE_HIS"/>
    <property type="match status" value="1"/>
</dbReference>
<dbReference type="PROSITE" id="PS00381">
    <property type="entry name" value="CLP_PROTEASE_SER"/>
    <property type="match status" value="1"/>
</dbReference>
<proteinExistence type="inferred from homology"/>
<name>CLPP2_PROMM</name>
<gene>
    <name evidence="1" type="primary">clpP2</name>
    <name type="ordered locus">PMT_0314</name>
</gene>
<comment type="function">
    <text evidence="1">Cleaves peptides in various proteins in a process that requires ATP hydrolysis. Has a chymotrypsin-like activity. Plays a major role in the degradation of misfolded proteins.</text>
</comment>
<comment type="catalytic activity">
    <reaction evidence="1">
        <text>Hydrolysis of proteins to small peptides in the presence of ATP and magnesium. alpha-casein is the usual test substrate. In the absence of ATP, only oligopeptides shorter than five residues are hydrolyzed (such as succinyl-Leu-Tyr-|-NHMec, and Leu-Tyr-Leu-|-Tyr-Trp, in which cleavage of the -Tyr-|-Leu- and -Tyr-|-Trp bonds also occurs).</text>
        <dbReference type="EC" id="3.4.21.92"/>
    </reaction>
</comment>
<comment type="subunit">
    <text evidence="1">Fourteen ClpP subunits assemble into 2 heptameric rings which stack back to back to give a disk-like structure with a central cavity, resembling the structure of eukaryotic proteasomes.</text>
</comment>
<comment type="subcellular location">
    <subcellularLocation>
        <location evidence="1">Cytoplasm</location>
    </subcellularLocation>
</comment>
<comment type="similarity">
    <text evidence="1">Belongs to the peptidase S14 family.</text>
</comment>
<protein>
    <recommendedName>
        <fullName evidence="1">ATP-dependent Clp protease proteolytic subunit 2</fullName>
        <ecNumber evidence="1">3.4.21.92</ecNumber>
    </recommendedName>
    <alternativeName>
        <fullName evidence="1">Endopeptidase Clp 2</fullName>
    </alternativeName>
</protein>
<accession>Q7V8M4</accession>
<keyword id="KW-0963">Cytoplasm</keyword>
<keyword id="KW-0378">Hydrolase</keyword>
<keyword id="KW-0645">Protease</keyword>
<keyword id="KW-1185">Reference proteome</keyword>
<keyword id="KW-0720">Serine protease</keyword>
<feature type="chain" id="PRO_0000179621" description="ATP-dependent Clp protease proteolytic subunit 2">
    <location>
        <begin position="1"/>
        <end position="200"/>
    </location>
</feature>
<feature type="active site" description="Nucleophile" evidence="1">
    <location>
        <position position="101"/>
    </location>
</feature>
<feature type="active site" evidence="1">
    <location>
        <position position="126"/>
    </location>
</feature>
<evidence type="ECO:0000255" key="1">
    <source>
        <dbReference type="HAMAP-Rule" id="MF_00444"/>
    </source>
</evidence>
<sequence>MPIGTPSVPYRLPGSQMERWVDIYTRLGVERILFLGQEVSDGVANSLVAQMLYLDSEDSTKPIYLYINSPGGSVTAGLAIYDTMKYVKSDVVTICVGLAASMGAFLLTAGTKGKRLALPHSRIMIHQPLGGTNQRQASDIEIEAREILRIKDMLNHSMAELTGQSFEKIEKDTDRDYFLSAAEAKDYGLIDRVIAHPNEA</sequence>